<dbReference type="EC" id="6.5.1.4" evidence="1"/>
<dbReference type="EMBL" id="AK009245">
    <property type="protein sequence ID" value="BAB26164.1"/>
    <property type="molecule type" value="mRNA"/>
</dbReference>
<dbReference type="EMBL" id="AK152129">
    <property type="protein sequence ID" value="BAE30970.1"/>
    <property type="molecule type" value="mRNA"/>
</dbReference>
<dbReference type="EMBL" id="AK159961">
    <property type="protein sequence ID" value="BAE35516.1"/>
    <property type="molecule type" value="mRNA"/>
</dbReference>
<dbReference type="EMBL" id="CH466532">
    <property type="protein sequence ID" value="EDL12384.1"/>
    <property type="molecule type" value="Genomic_DNA"/>
</dbReference>
<dbReference type="CCDS" id="CCDS17786.1"/>
<dbReference type="RefSeq" id="NP_079793.2">
    <property type="nucleotide sequence ID" value="NM_025517.3"/>
</dbReference>
<dbReference type="SMR" id="Q9D7H3"/>
<dbReference type="BioGRID" id="211419">
    <property type="interactions" value="4"/>
</dbReference>
<dbReference type="FunCoup" id="Q9D7H3">
    <property type="interactions" value="3322"/>
</dbReference>
<dbReference type="STRING" id="10090.ENSMUSP00000000348"/>
<dbReference type="GlyGen" id="Q9D7H3">
    <property type="glycosylation" value="2 sites, 1 N-linked glycan (1 site), 1 O-linked glycan (1 site)"/>
</dbReference>
<dbReference type="iPTMnet" id="Q9D7H3"/>
<dbReference type="PhosphoSitePlus" id="Q9D7H3"/>
<dbReference type="SwissPalm" id="Q9D7H3"/>
<dbReference type="REPRODUCTION-2DPAGE" id="Q9D7H3"/>
<dbReference type="jPOST" id="Q9D7H3"/>
<dbReference type="PaxDb" id="10090-ENSMUSP00000000348"/>
<dbReference type="ProteomicsDB" id="260944"/>
<dbReference type="Pumba" id="Q9D7H3"/>
<dbReference type="Antibodypedia" id="33694">
    <property type="antibodies" value="139 antibodies from 27 providers"/>
</dbReference>
<dbReference type="DNASU" id="66368"/>
<dbReference type="Ensembl" id="ENSMUST00000000348.15">
    <property type="protein sequence ID" value="ENSMUSP00000000348.9"/>
    <property type="gene ID" value="ENSMUSG00000000339.15"/>
</dbReference>
<dbReference type="GeneID" id="66368"/>
<dbReference type="KEGG" id="mmu:66368"/>
<dbReference type="UCSC" id="uc008rcd.2">
    <property type="organism name" value="mouse"/>
</dbReference>
<dbReference type="AGR" id="MGI:1913618"/>
<dbReference type="CTD" id="8634"/>
<dbReference type="MGI" id="MGI:1913618">
    <property type="gene designation" value="Rtca"/>
</dbReference>
<dbReference type="VEuPathDB" id="HostDB:ENSMUSG00000000339"/>
<dbReference type="eggNOG" id="KOG3980">
    <property type="taxonomic scope" value="Eukaryota"/>
</dbReference>
<dbReference type="GeneTree" id="ENSGT00530000063404"/>
<dbReference type="HOGENOM" id="CLU_027882_0_1_1"/>
<dbReference type="InParanoid" id="Q9D7H3"/>
<dbReference type="OMA" id="WSPPIDY"/>
<dbReference type="OrthoDB" id="25029at2759"/>
<dbReference type="PhylomeDB" id="Q9D7H3"/>
<dbReference type="TreeFam" id="TF300831"/>
<dbReference type="BioGRID-ORCS" id="66368">
    <property type="hits" value="0 hits in 78 CRISPR screens"/>
</dbReference>
<dbReference type="CD-CODE" id="764D0258">
    <property type="entry name" value="Neuronal RNP granule"/>
</dbReference>
<dbReference type="ChiTaRS" id="Rtca">
    <property type="organism name" value="mouse"/>
</dbReference>
<dbReference type="PRO" id="PR:Q9D7H3"/>
<dbReference type="Proteomes" id="UP000000589">
    <property type="component" value="Chromosome 3"/>
</dbReference>
<dbReference type="RNAct" id="Q9D7H3">
    <property type="molecule type" value="protein"/>
</dbReference>
<dbReference type="Bgee" id="ENSMUSG00000000339">
    <property type="expression patterns" value="Expressed in ear vesicle and 255 other cell types or tissues"/>
</dbReference>
<dbReference type="ExpressionAtlas" id="Q9D7H3">
    <property type="expression patterns" value="baseline and differential"/>
</dbReference>
<dbReference type="GO" id="GO:0005654">
    <property type="term" value="C:nucleoplasm"/>
    <property type="evidence" value="ECO:0000250"/>
    <property type="project" value="UniProtKB"/>
</dbReference>
<dbReference type="GO" id="GO:0005524">
    <property type="term" value="F:ATP binding"/>
    <property type="evidence" value="ECO:0007669"/>
    <property type="project" value="UniProtKB-KW"/>
</dbReference>
<dbReference type="GO" id="GO:0003963">
    <property type="term" value="F:RNA-3'-phosphate cyclase activity"/>
    <property type="evidence" value="ECO:0000250"/>
    <property type="project" value="UniProtKB"/>
</dbReference>
<dbReference type="GO" id="GO:1905592">
    <property type="term" value="P:negative regulation of optical nerve axon regeneration"/>
    <property type="evidence" value="ECO:0000315"/>
    <property type="project" value="UniProtKB"/>
</dbReference>
<dbReference type="GO" id="GO:0006396">
    <property type="term" value="P:RNA processing"/>
    <property type="evidence" value="ECO:0007669"/>
    <property type="project" value="InterPro"/>
</dbReference>
<dbReference type="CDD" id="cd00874">
    <property type="entry name" value="RNA_Cyclase_Class_II"/>
    <property type="match status" value="1"/>
</dbReference>
<dbReference type="FunFam" id="3.30.360.20:FF:000002">
    <property type="entry name" value="RNA terminal phosphate cyclase-like 1"/>
    <property type="match status" value="1"/>
</dbReference>
<dbReference type="Gene3D" id="3.65.10.20">
    <property type="entry name" value="RNA 3'-terminal phosphate cyclase domain"/>
    <property type="match status" value="1"/>
</dbReference>
<dbReference type="Gene3D" id="3.30.360.20">
    <property type="entry name" value="RNA 3'-terminal phosphate cyclase, insert domain"/>
    <property type="match status" value="1"/>
</dbReference>
<dbReference type="HAMAP" id="MF_00200">
    <property type="entry name" value="RTC"/>
    <property type="match status" value="1"/>
</dbReference>
<dbReference type="InterPro" id="IPR013791">
    <property type="entry name" value="RNA3'-term_phos_cycl_insert"/>
</dbReference>
<dbReference type="InterPro" id="IPR023797">
    <property type="entry name" value="RNA3'_phos_cyclase_dom"/>
</dbReference>
<dbReference type="InterPro" id="IPR037136">
    <property type="entry name" value="RNA3'_phos_cyclase_dom_sf"/>
</dbReference>
<dbReference type="InterPro" id="IPR000228">
    <property type="entry name" value="RNA3'_term_phos_cyc"/>
</dbReference>
<dbReference type="InterPro" id="IPR017770">
    <property type="entry name" value="RNA3'_term_phos_cyc_type_1"/>
</dbReference>
<dbReference type="InterPro" id="IPR020719">
    <property type="entry name" value="RNA3'_term_phos_cycl-like_CS"/>
</dbReference>
<dbReference type="InterPro" id="IPR013792">
    <property type="entry name" value="RNA3'P_cycl/enolpyr_Trfase_a/b"/>
</dbReference>
<dbReference type="InterPro" id="IPR036553">
    <property type="entry name" value="RPTC_insert"/>
</dbReference>
<dbReference type="NCBIfam" id="TIGR03399">
    <property type="entry name" value="RNA_3prim_cycl"/>
    <property type="match status" value="1"/>
</dbReference>
<dbReference type="PANTHER" id="PTHR11096">
    <property type="entry name" value="RNA 3' TERMINAL PHOSPHATE CYCLASE"/>
    <property type="match status" value="1"/>
</dbReference>
<dbReference type="PANTHER" id="PTHR11096:SF0">
    <property type="entry name" value="RNA 3'-TERMINAL PHOSPHATE CYCLASE"/>
    <property type="match status" value="1"/>
</dbReference>
<dbReference type="Pfam" id="PF01137">
    <property type="entry name" value="RTC"/>
    <property type="match status" value="1"/>
</dbReference>
<dbReference type="Pfam" id="PF05189">
    <property type="entry name" value="RTC_insert"/>
    <property type="match status" value="1"/>
</dbReference>
<dbReference type="PIRSF" id="PIRSF005378">
    <property type="entry name" value="RNA3'_term_phos_cycl_euk"/>
    <property type="match status" value="1"/>
</dbReference>
<dbReference type="SUPFAM" id="SSF55205">
    <property type="entry name" value="EPT/RTPC-like"/>
    <property type="match status" value="2"/>
</dbReference>
<dbReference type="SUPFAM" id="SSF52913">
    <property type="entry name" value="RNA 3'-terminal phosphate cyclase, RPTC, insert domain"/>
    <property type="match status" value="1"/>
</dbReference>
<dbReference type="PROSITE" id="PS01287">
    <property type="entry name" value="RTC"/>
    <property type="match status" value="1"/>
</dbReference>
<sequence length="366" mass="39254">MEGQRVEVDGGIMEGGGQILRVSTALSCLLGLPLRVQKIRAGRSTPGLRPQHLSGLEMVRDLCGGHLEGAEIGSTEITFTPEKIRGGVHTADTKTAGSVCLLMQVSMPCVLFAASPSELRLKGGTNAEMAPQIDYTMMVFKPIAEKFGFTFNCDIKTRGYYPKGGGEVIVRVSPVKRLDPINLTDRGSVTKIYGRAFVAGVLPLKVAKDMAAAAVRCIRKEIRDLYVSIQPVQEARDQAFGNGSGIIIVAETSTGCLFAGSSLGKRGVNADKVGIEAAEMLLANLRHGGTVDEYLQDQLIIFMALANGISRIKTGSVTLHTQTAIHFAEQLAKAKFTVKKSEEEEDATKDTYVIECEGIGMANPHL</sequence>
<accession>Q9D7H3</accession>
<accession>Q3TVV2</accession>
<feature type="chain" id="PRO_0000156411" description="RNA 3'-terminal phosphate cyclase">
    <location>
        <begin position="1"/>
        <end position="366"/>
    </location>
</feature>
<feature type="active site" description="Tele-AMP-histidine intermediate" evidence="2">
    <location>
        <position position="320"/>
    </location>
</feature>
<feature type="binding site" evidence="2">
    <location>
        <position position="104"/>
    </location>
    <ligand>
        <name>ATP</name>
        <dbReference type="ChEBI" id="CHEBI:30616"/>
    </ligand>
</feature>
<feature type="binding site" evidence="2">
    <location>
        <position position="131"/>
    </location>
    <ligand>
        <name>ATP</name>
        <dbReference type="ChEBI" id="CHEBI:30616"/>
    </ligand>
</feature>
<feature type="binding site" evidence="2">
    <location>
        <position position="294"/>
    </location>
    <ligand>
        <name>ATP</name>
        <dbReference type="ChEBI" id="CHEBI:30616"/>
    </ligand>
</feature>
<feature type="binding site" evidence="2">
    <location>
        <position position="297"/>
    </location>
    <ligand>
        <name>ATP</name>
        <dbReference type="ChEBI" id="CHEBI:30616"/>
    </ligand>
</feature>
<feature type="binding site" evidence="2">
    <location>
        <position position="298"/>
    </location>
    <ligand>
        <name>ATP</name>
        <dbReference type="ChEBI" id="CHEBI:30616"/>
    </ligand>
</feature>
<feature type="binding site" evidence="2">
    <location>
        <position position="320"/>
    </location>
    <ligand>
        <name>ATP</name>
        <dbReference type="ChEBI" id="CHEBI:30616"/>
    </ligand>
</feature>
<feature type="sequence conflict" description="In Ref. 1; BAB26164." evidence="5" ref="1">
    <original>V</original>
    <variation>A</variation>
    <location>
        <position position="273"/>
    </location>
</feature>
<keyword id="KW-0067">ATP-binding</keyword>
<keyword id="KW-0436">Ligase</keyword>
<keyword id="KW-0547">Nucleotide-binding</keyword>
<keyword id="KW-0539">Nucleus</keyword>
<keyword id="KW-1185">Reference proteome</keyword>
<evidence type="ECO:0000250" key="1">
    <source>
        <dbReference type="UniProtKB" id="O00442"/>
    </source>
</evidence>
<evidence type="ECO:0000250" key="2">
    <source>
        <dbReference type="UniProtKB" id="P46849"/>
    </source>
</evidence>
<evidence type="ECO:0000269" key="3">
    <source>
    </source>
</evidence>
<evidence type="ECO:0000303" key="4">
    <source>
    </source>
</evidence>
<evidence type="ECO:0000305" key="5"/>
<evidence type="ECO:0000312" key="6">
    <source>
        <dbReference type="MGI" id="MGI:1913618"/>
    </source>
</evidence>
<gene>
    <name evidence="4 6" type="primary">RtcA</name>
    <name type="synonym">Rpc1</name>
    <name type="synonym">Rtcd1</name>
</gene>
<protein>
    <recommendedName>
        <fullName evidence="4">RNA 3'-terminal phosphate cyclase</fullName>
        <shortName evidence="4">RNA cyclase</shortName>
        <shortName evidence="4">RNA-3'-phosphate cyclase</shortName>
        <ecNumber evidence="1">6.5.1.4</ecNumber>
    </recommendedName>
    <alternativeName>
        <fullName evidence="4">RNA terminal phosphate cyclase domain-containing protein 1</fullName>
    </alternativeName>
</protein>
<name>RTCA_MOUSE</name>
<comment type="function">
    <text evidence="1 3">Catalyzes the conversion of 3'-phosphate to a 2',3'-cyclic phosphodiester at the end of RNA (By similarity). The mechanism of action of the enzyme occurs in 3 steps: (A) adenylation of the enzyme by ATP; (B) transfer of adenylate to an RNA-N3'P to produce RNA-N3'PP5'A; (C) and attack of the adjacent 2'-hydroxyl on the 3'-phosphorus in the diester linkage to produce the cyclic end product (By similarity). Likely functions in some aspects of cellular RNA processing (PubMed:25961792). Function plays an important role in regulating axon regeneration by inhibiting central nervous system (CNS) axon regeneration following optic nerve injury (PubMed:25961792).</text>
</comment>
<comment type="catalytic activity">
    <reaction evidence="1">
        <text>a 3'-end 3'-phospho-ribonucleotide-RNA + ATP = a 3'-end 2',3'-cyclophospho-ribonucleotide-RNA + AMP + diphosphate</text>
        <dbReference type="Rhea" id="RHEA:23976"/>
        <dbReference type="Rhea" id="RHEA-COMP:10463"/>
        <dbReference type="Rhea" id="RHEA-COMP:10464"/>
        <dbReference type="ChEBI" id="CHEBI:30616"/>
        <dbReference type="ChEBI" id="CHEBI:33019"/>
        <dbReference type="ChEBI" id="CHEBI:83062"/>
        <dbReference type="ChEBI" id="CHEBI:83064"/>
        <dbReference type="ChEBI" id="CHEBI:456215"/>
        <dbReference type="EC" id="6.5.1.4"/>
    </reaction>
</comment>
<comment type="subcellular location">
    <subcellularLocation>
        <location evidence="1">Nucleus</location>
        <location evidence="1">Nucleoplasm</location>
    </subcellularLocation>
</comment>
<comment type="tissue specificity">
    <text evidence="3">Detected in retinal ganglion cells (RGCs) (at protein level).</text>
</comment>
<comment type="similarity">
    <text evidence="5">Belongs to the RNA 3'-terminal cyclase family. Type 1 subfamily.</text>
</comment>
<organism>
    <name type="scientific">Mus musculus</name>
    <name type="common">Mouse</name>
    <dbReference type="NCBI Taxonomy" id="10090"/>
    <lineage>
        <taxon>Eukaryota</taxon>
        <taxon>Metazoa</taxon>
        <taxon>Chordata</taxon>
        <taxon>Craniata</taxon>
        <taxon>Vertebrata</taxon>
        <taxon>Euteleostomi</taxon>
        <taxon>Mammalia</taxon>
        <taxon>Eutheria</taxon>
        <taxon>Euarchontoglires</taxon>
        <taxon>Glires</taxon>
        <taxon>Rodentia</taxon>
        <taxon>Myomorpha</taxon>
        <taxon>Muroidea</taxon>
        <taxon>Muridae</taxon>
        <taxon>Murinae</taxon>
        <taxon>Mus</taxon>
        <taxon>Mus</taxon>
    </lineage>
</organism>
<proteinExistence type="evidence at protein level"/>
<reference key="1">
    <citation type="journal article" date="2005" name="Science">
        <title>The transcriptional landscape of the mammalian genome.</title>
        <authorList>
            <person name="Carninci P."/>
            <person name="Kasukawa T."/>
            <person name="Katayama S."/>
            <person name="Gough J."/>
            <person name="Frith M.C."/>
            <person name="Maeda N."/>
            <person name="Oyama R."/>
            <person name="Ravasi T."/>
            <person name="Lenhard B."/>
            <person name="Wells C."/>
            <person name="Kodzius R."/>
            <person name="Shimokawa K."/>
            <person name="Bajic V.B."/>
            <person name="Brenner S.E."/>
            <person name="Batalov S."/>
            <person name="Forrest A.R."/>
            <person name="Zavolan M."/>
            <person name="Davis M.J."/>
            <person name="Wilming L.G."/>
            <person name="Aidinis V."/>
            <person name="Allen J.E."/>
            <person name="Ambesi-Impiombato A."/>
            <person name="Apweiler R."/>
            <person name="Aturaliya R.N."/>
            <person name="Bailey T.L."/>
            <person name="Bansal M."/>
            <person name="Baxter L."/>
            <person name="Beisel K.W."/>
            <person name="Bersano T."/>
            <person name="Bono H."/>
            <person name="Chalk A.M."/>
            <person name="Chiu K.P."/>
            <person name="Choudhary V."/>
            <person name="Christoffels A."/>
            <person name="Clutterbuck D.R."/>
            <person name="Crowe M.L."/>
            <person name="Dalla E."/>
            <person name="Dalrymple B.P."/>
            <person name="de Bono B."/>
            <person name="Della Gatta G."/>
            <person name="di Bernardo D."/>
            <person name="Down T."/>
            <person name="Engstrom P."/>
            <person name="Fagiolini M."/>
            <person name="Faulkner G."/>
            <person name="Fletcher C.F."/>
            <person name="Fukushima T."/>
            <person name="Furuno M."/>
            <person name="Futaki S."/>
            <person name="Gariboldi M."/>
            <person name="Georgii-Hemming P."/>
            <person name="Gingeras T.R."/>
            <person name="Gojobori T."/>
            <person name="Green R.E."/>
            <person name="Gustincich S."/>
            <person name="Harbers M."/>
            <person name="Hayashi Y."/>
            <person name="Hensch T.K."/>
            <person name="Hirokawa N."/>
            <person name="Hill D."/>
            <person name="Huminiecki L."/>
            <person name="Iacono M."/>
            <person name="Ikeo K."/>
            <person name="Iwama A."/>
            <person name="Ishikawa T."/>
            <person name="Jakt M."/>
            <person name="Kanapin A."/>
            <person name="Katoh M."/>
            <person name="Kawasawa Y."/>
            <person name="Kelso J."/>
            <person name="Kitamura H."/>
            <person name="Kitano H."/>
            <person name="Kollias G."/>
            <person name="Krishnan S.P."/>
            <person name="Kruger A."/>
            <person name="Kummerfeld S.K."/>
            <person name="Kurochkin I.V."/>
            <person name="Lareau L.F."/>
            <person name="Lazarevic D."/>
            <person name="Lipovich L."/>
            <person name="Liu J."/>
            <person name="Liuni S."/>
            <person name="McWilliam S."/>
            <person name="Madan Babu M."/>
            <person name="Madera M."/>
            <person name="Marchionni L."/>
            <person name="Matsuda H."/>
            <person name="Matsuzawa S."/>
            <person name="Miki H."/>
            <person name="Mignone F."/>
            <person name="Miyake S."/>
            <person name="Morris K."/>
            <person name="Mottagui-Tabar S."/>
            <person name="Mulder N."/>
            <person name="Nakano N."/>
            <person name="Nakauchi H."/>
            <person name="Ng P."/>
            <person name="Nilsson R."/>
            <person name="Nishiguchi S."/>
            <person name="Nishikawa S."/>
            <person name="Nori F."/>
            <person name="Ohara O."/>
            <person name="Okazaki Y."/>
            <person name="Orlando V."/>
            <person name="Pang K.C."/>
            <person name="Pavan W.J."/>
            <person name="Pavesi G."/>
            <person name="Pesole G."/>
            <person name="Petrovsky N."/>
            <person name="Piazza S."/>
            <person name="Reed J."/>
            <person name="Reid J.F."/>
            <person name="Ring B.Z."/>
            <person name="Ringwald M."/>
            <person name="Rost B."/>
            <person name="Ruan Y."/>
            <person name="Salzberg S.L."/>
            <person name="Sandelin A."/>
            <person name="Schneider C."/>
            <person name="Schoenbach C."/>
            <person name="Sekiguchi K."/>
            <person name="Semple C.A."/>
            <person name="Seno S."/>
            <person name="Sessa L."/>
            <person name="Sheng Y."/>
            <person name="Shibata Y."/>
            <person name="Shimada H."/>
            <person name="Shimada K."/>
            <person name="Silva D."/>
            <person name="Sinclair B."/>
            <person name="Sperling S."/>
            <person name="Stupka E."/>
            <person name="Sugiura K."/>
            <person name="Sultana R."/>
            <person name="Takenaka Y."/>
            <person name="Taki K."/>
            <person name="Tammoja K."/>
            <person name="Tan S.L."/>
            <person name="Tang S."/>
            <person name="Taylor M.S."/>
            <person name="Tegner J."/>
            <person name="Teichmann S.A."/>
            <person name="Ueda H.R."/>
            <person name="van Nimwegen E."/>
            <person name="Verardo R."/>
            <person name="Wei C.L."/>
            <person name="Yagi K."/>
            <person name="Yamanishi H."/>
            <person name="Zabarovsky E."/>
            <person name="Zhu S."/>
            <person name="Zimmer A."/>
            <person name="Hide W."/>
            <person name="Bult C."/>
            <person name="Grimmond S.M."/>
            <person name="Teasdale R.D."/>
            <person name="Liu E.T."/>
            <person name="Brusic V."/>
            <person name="Quackenbush J."/>
            <person name="Wahlestedt C."/>
            <person name="Mattick J.S."/>
            <person name="Hume D.A."/>
            <person name="Kai C."/>
            <person name="Sasaki D."/>
            <person name="Tomaru Y."/>
            <person name="Fukuda S."/>
            <person name="Kanamori-Katayama M."/>
            <person name="Suzuki M."/>
            <person name="Aoki J."/>
            <person name="Arakawa T."/>
            <person name="Iida J."/>
            <person name="Imamura K."/>
            <person name="Itoh M."/>
            <person name="Kato T."/>
            <person name="Kawaji H."/>
            <person name="Kawagashira N."/>
            <person name="Kawashima T."/>
            <person name="Kojima M."/>
            <person name="Kondo S."/>
            <person name="Konno H."/>
            <person name="Nakano K."/>
            <person name="Ninomiya N."/>
            <person name="Nishio T."/>
            <person name="Okada M."/>
            <person name="Plessy C."/>
            <person name="Shibata K."/>
            <person name="Shiraki T."/>
            <person name="Suzuki S."/>
            <person name="Tagami M."/>
            <person name="Waki K."/>
            <person name="Watahiki A."/>
            <person name="Okamura-Oho Y."/>
            <person name="Suzuki H."/>
            <person name="Kawai J."/>
            <person name="Hayashizaki Y."/>
        </authorList>
    </citation>
    <scope>NUCLEOTIDE SEQUENCE [LARGE SCALE MRNA]</scope>
    <source>
        <strain>C57BL/6J</strain>
        <tissue>Bone marrow</tissue>
        <tissue>Tongue</tissue>
    </source>
</reference>
<reference key="2">
    <citation type="submission" date="2005-09" db="EMBL/GenBank/DDBJ databases">
        <authorList>
            <person name="Mural R.J."/>
            <person name="Adams M.D."/>
            <person name="Myers E.W."/>
            <person name="Smith H.O."/>
            <person name="Venter J.C."/>
        </authorList>
    </citation>
    <scope>NUCLEOTIDE SEQUENCE [LARGE SCALE GENOMIC DNA]</scope>
</reference>
<reference key="3">
    <citation type="journal article" date="2010" name="Cell">
        <title>A tissue-specific atlas of mouse protein phosphorylation and expression.</title>
        <authorList>
            <person name="Huttlin E.L."/>
            <person name="Jedrychowski M.P."/>
            <person name="Elias J.E."/>
            <person name="Goswami T."/>
            <person name="Rad R."/>
            <person name="Beausoleil S.A."/>
            <person name="Villen J."/>
            <person name="Haas W."/>
            <person name="Sowa M.E."/>
            <person name="Gygi S.P."/>
        </authorList>
    </citation>
    <scope>IDENTIFICATION BY MASS SPECTROMETRY [LARGE SCALE ANALYSIS]</scope>
    <source>
        <tissue>Brain</tissue>
        <tissue>Brown adipose tissue</tissue>
        <tissue>Heart</tissue>
        <tissue>Pancreas</tissue>
        <tissue>Spleen</tissue>
        <tissue>Testis</tissue>
    </source>
</reference>
<reference key="4">
    <citation type="journal article" date="2015" name="Nat. Neurosci.">
        <title>Regulation of axon regeneration by the RNA repair and splicing pathway.</title>
        <authorList>
            <person name="Song Y."/>
            <person name="Sretavan D."/>
            <person name="Salegio E.A."/>
            <person name="Berg J."/>
            <person name="Huang X."/>
            <person name="Cheng T."/>
            <person name="Xiong X."/>
            <person name="Meltzer S."/>
            <person name="Han C."/>
            <person name="Nguyen T.T."/>
            <person name="Bresnahan J.C."/>
            <person name="Beattie M.S."/>
            <person name="Jan L.Y."/>
            <person name="Jan Y.N."/>
        </authorList>
    </citation>
    <scope>FUNCTION</scope>
    <scope>TISSUE SPECIFICITY</scope>
</reference>